<name>FYV7_YEAST</name>
<comment type="function">
    <text evidence="3 4">Involved in the processing of the 20S pre-rRNA. Required for survival upon K1 Killer toxin exposure.</text>
</comment>
<comment type="subcellular location">
    <subcellularLocation>
        <location evidence="5">Nucleus</location>
        <location evidence="5">Nucleolus</location>
    </subcellularLocation>
</comment>
<comment type="miscellaneous">
    <text evidence="6">Present with 1460 molecules/cell in log phase SD medium.</text>
</comment>
<comment type="similarity">
    <text evidence="7">Belongs to the FYV7 family.</text>
</comment>
<keyword id="KW-0175">Coiled coil</keyword>
<keyword id="KW-0539">Nucleus</keyword>
<keyword id="KW-1185">Reference proteome</keyword>
<keyword id="KW-0698">rRNA processing</keyword>
<protein>
    <recommendedName>
        <fullName>rRNA-processing protein FYV7</fullName>
    </recommendedName>
    <alternativeName>
        <fullName>Function required for yeast viability protein 7</fullName>
    </alternativeName>
</protein>
<sequence>MGTAKQNQNRKKFTREYKVKEIQRSITKKTRLRKEYLKALKDEGYAVPEKEPKTVAKESVRKIKEARAIEGKKKLDEKKEIKKQRKRMQKDELNKQRNEQLERIRVSKEKFQRREDRKKKLTQRTRTGQPLMGPKIEDLLDKIKTDDTYTS</sequence>
<reference key="1">
    <citation type="journal article" date="1997" name="Nature">
        <title>The nucleotide sequence of Saccharomyces cerevisiae chromosome XII.</title>
        <authorList>
            <person name="Johnston M."/>
            <person name="Hillier L.W."/>
            <person name="Riles L."/>
            <person name="Albermann K."/>
            <person name="Andre B."/>
            <person name="Ansorge W."/>
            <person name="Benes V."/>
            <person name="Brueckner M."/>
            <person name="Delius H."/>
            <person name="Dubois E."/>
            <person name="Duesterhoeft A."/>
            <person name="Entian K.-D."/>
            <person name="Floeth M."/>
            <person name="Goffeau A."/>
            <person name="Hebling U."/>
            <person name="Heumann K."/>
            <person name="Heuss-Neitzel D."/>
            <person name="Hilbert H."/>
            <person name="Hilger F."/>
            <person name="Kleine K."/>
            <person name="Koetter P."/>
            <person name="Louis E.J."/>
            <person name="Messenguy F."/>
            <person name="Mewes H.-W."/>
            <person name="Miosga T."/>
            <person name="Moestl D."/>
            <person name="Mueller-Auer S."/>
            <person name="Nentwich U."/>
            <person name="Obermaier B."/>
            <person name="Piravandi E."/>
            <person name="Pohl T.M."/>
            <person name="Portetelle D."/>
            <person name="Purnelle B."/>
            <person name="Rechmann S."/>
            <person name="Rieger M."/>
            <person name="Rinke M."/>
            <person name="Rose M."/>
            <person name="Scharfe M."/>
            <person name="Scherens B."/>
            <person name="Scholler P."/>
            <person name="Schwager C."/>
            <person name="Schwarz S."/>
            <person name="Underwood A.P."/>
            <person name="Urrestarazu L.A."/>
            <person name="Vandenbol M."/>
            <person name="Verhasselt P."/>
            <person name="Vierendeels F."/>
            <person name="Voet M."/>
            <person name="Volckaert G."/>
            <person name="Voss H."/>
            <person name="Wambutt R."/>
            <person name="Wedler E."/>
            <person name="Wedler H."/>
            <person name="Zimmermann F.K."/>
            <person name="Zollner A."/>
            <person name="Hani J."/>
            <person name="Hoheisel J.D."/>
        </authorList>
    </citation>
    <scope>NUCLEOTIDE SEQUENCE [LARGE SCALE GENOMIC DNA]</scope>
    <source>
        <strain>ATCC 204508 / S288c</strain>
    </source>
</reference>
<reference key="2">
    <citation type="journal article" date="2014" name="G3 (Bethesda)">
        <title>The reference genome sequence of Saccharomyces cerevisiae: Then and now.</title>
        <authorList>
            <person name="Engel S.R."/>
            <person name="Dietrich F.S."/>
            <person name="Fisk D.G."/>
            <person name="Binkley G."/>
            <person name="Balakrishnan R."/>
            <person name="Costanzo M.C."/>
            <person name="Dwight S.S."/>
            <person name="Hitz B.C."/>
            <person name="Karra K."/>
            <person name="Nash R.S."/>
            <person name="Weng S."/>
            <person name="Wong E.D."/>
            <person name="Lloyd P."/>
            <person name="Skrzypek M.S."/>
            <person name="Miyasato S.R."/>
            <person name="Simison M."/>
            <person name="Cherry J.M."/>
        </authorList>
    </citation>
    <scope>GENOME REANNOTATION</scope>
    <source>
        <strain>ATCC 204508 / S288c</strain>
    </source>
</reference>
<reference key="3">
    <citation type="journal article" date="2007" name="Genome Res.">
        <title>Approaching a complete repository of sequence-verified protein-encoding clones for Saccharomyces cerevisiae.</title>
        <authorList>
            <person name="Hu Y."/>
            <person name="Rolfs A."/>
            <person name="Bhullar B."/>
            <person name="Murthy T.V.S."/>
            <person name="Zhu C."/>
            <person name="Berger M.F."/>
            <person name="Camargo A.A."/>
            <person name="Kelley F."/>
            <person name="McCarron S."/>
            <person name="Jepson D."/>
            <person name="Richardson A."/>
            <person name="Raphael J."/>
            <person name="Moreira D."/>
            <person name="Taycher E."/>
            <person name="Zuo D."/>
            <person name="Mohr S."/>
            <person name="Kane M.F."/>
            <person name="Williamson J."/>
            <person name="Simpson A.J.G."/>
            <person name="Bulyk M.L."/>
            <person name="Harlow E."/>
            <person name="Marsischky G."/>
            <person name="Kolodner R.D."/>
            <person name="LaBaer J."/>
        </authorList>
    </citation>
    <scope>NUCLEOTIDE SEQUENCE [GENOMIC DNA]</scope>
    <source>
        <strain>ATCC 204508 / S288c</strain>
    </source>
</reference>
<reference key="4">
    <citation type="journal article" date="2003" name="Cell">
        <title>A panoramic view of yeast noncoding RNA processing.</title>
        <authorList>
            <person name="Peng W.-T."/>
            <person name="Robinson M.D."/>
            <person name="Mnaimneh S."/>
            <person name="Krogan N.J."/>
            <person name="Cagney G."/>
            <person name="Morris Q.D."/>
            <person name="Davierwala A.P."/>
            <person name="Grigull J."/>
            <person name="Yang X."/>
            <person name="Zhang W."/>
            <person name="Mitsakakis N."/>
            <person name="Ryan O.W."/>
            <person name="Datta N."/>
            <person name="Jojic V."/>
            <person name="Pal C."/>
            <person name="Canadien V."/>
            <person name="Richards D.P."/>
            <person name="Beattie B."/>
            <person name="Wu L.F."/>
            <person name="Altschuler S.J."/>
            <person name="Roweis S."/>
            <person name="Frey B.J."/>
            <person name="Emili A."/>
            <person name="Greenblatt J.F."/>
            <person name="Hughes T.R."/>
        </authorList>
    </citation>
    <scope>FUNCTION</scope>
</reference>
<reference key="5">
    <citation type="journal article" date="2003" name="Genetics">
        <title>A Saccharomyces cerevisiae genome-wide mutant screen for altered sensitivity to K1 killer toxin.</title>
        <authorList>
            <person name="Page N."/>
            <person name="Gerard-Vincent M."/>
            <person name="Menard P."/>
            <person name="Beaulieu M."/>
            <person name="Azuma M."/>
            <person name="Dijkgraaf G.J.P."/>
            <person name="Li H."/>
            <person name="Marcoux J."/>
            <person name="Nguyen T."/>
            <person name="Dowse T."/>
            <person name="Sdicu A.-M."/>
            <person name="Bussey H."/>
        </authorList>
    </citation>
    <scope>FUNCTION</scope>
</reference>
<reference key="6">
    <citation type="journal article" date="2003" name="Nature">
        <title>Global analysis of protein localization in budding yeast.</title>
        <authorList>
            <person name="Huh W.-K."/>
            <person name="Falvo J.V."/>
            <person name="Gerke L.C."/>
            <person name="Carroll A.S."/>
            <person name="Howson R.W."/>
            <person name="Weissman J.S."/>
            <person name="O'Shea E.K."/>
        </authorList>
    </citation>
    <scope>SUBCELLULAR LOCATION [LARGE SCALE ANALYSIS]</scope>
</reference>
<reference key="7">
    <citation type="journal article" date="2003" name="Nature">
        <title>Global analysis of protein expression in yeast.</title>
        <authorList>
            <person name="Ghaemmaghami S."/>
            <person name="Huh W.-K."/>
            <person name="Bower K."/>
            <person name="Howson R.W."/>
            <person name="Belle A."/>
            <person name="Dephoure N."/>
            <person name="O'Shea E.K."/>
            <person name="Weissman J.S."/>
        </authorList>
    </citation>
    <scope>LEVEL OF PROTEIN EXPRESSION [LARGE SCALE ANALYSIS]</scope>
</reference>
<reference key="8">
    <citation type="journal article" date="2012" name="Proc. Natl. Acad. Sci. U.S.A.">
        <title>N-terminal acetylome analyses and functional insights of the N-terminal acetyltransferase NatB.</title>
        <authorList>
            <person name="Van Damme P."/>
            <person name="Lasa M."/>
            <person name="Polevoda B."/>
            <person name="Gazquez C."/>
            <person name="Elosegui-Artola A."/>
            <person name="Kim D.S."/>
            <person name="De Juan-Pardo E."/>
            <person name="Demeyer K."/>
            <person name="Hole K."/>
            <person name="Larrea E."/>
            <person name="Timmerman E."/>
            <person name="Prieto J."/>
            <person name="Arnesen T."/>
            <person name="Sherman F."/>
            <person name="Gevaert K."/>
            <person name="Aldabe R."/>
        </authorList>
    </citation>
    <scope>IDENTIFICATION BY MASS SPECTROMETRY [LARGE SCALE ANALYSIS]</scope>
</reference>
<gene>
    <name type="primary">FYV7</name>
    <name type="ordered locus">YLR068W</name>
    <name type="ORF">L2192</name>
</gene>
<dbReference type="EMBL" id="X94607">
    <property type="protein sequence ID" value="CAA64314.1"/>
    <property type="molecule type" value="Genomic_DNA"/>
</dbReference>
<dbReference type="EMBL" id="Z73240">
    <property type="protein sequence ID" value="CAA97624.1"/>
    <property type="molecule type" value="Genomic_DNA"/>
</dbReference>
<dbReference type="EMBL" id="AY558206">
    <property type="protein sequence ID" value="AAS56532.1"/>
    <property type="molecule type" value="Genomic_DNA"/>
</dbReference>
<dbReference type="EMBL" id="BK006945">
    <property type="protein sequence ID" value="DAA09385.1"/>
    <property type="molecule type" value="Genomic_DNA"/>
</dbReference>
<dbReference type="PIR" id="S61641">
    <property type="entry name" value="S61641"/>
</dbReference>
<dbReference type="RefSeq" id="NP_013169.1">
    <property type="nucleotide sequence ID" value="NM_001181955.1"/>
</dbReference>
<dbReference type="BioGRID" id="31342">
    <property type="interactions" value="57"/>
</dbReference>
<dbReference type="DIP" id="DIP-4827N"/>
<dbReference type="FunCoup" id="Q12247">
    <property type="interactions" value="136"/>
</dbReference>
<dbReference type="IntAct" id="Q12247">
    <property type="interactions" value="3"/>
</dbReference>
<dbReference type="MINT" id="Q12247"/>
<dbReference type="STRING" id="4932.YLR068W"/>
<dbReference type="iPTMnet" id="Q12247"/>
<dbReference type="PaxDb" id="4932-YLR068W"/>
<dbReference type="PeptideAtlas" id="Q12247"/>
<dbReference type="EnsemblFungi" id="YLR068W_mRNA">
    <property type="protein sequence ID" value="YLR068W"/>
    <property type="gene ID" value="YLR068W"/>
</dbReference>
<dbReference type="GeneID" id="850757"/>
<dbReference type="KEGG" id="sce:YLR068W"/>
<dbReference type="AGR" id="SGD:S000004058"/>
<dbReference type="SGD" id="S000004058">
    <property type="gene designation" value="FYV7"/>
</dbReference>
<dbReference type="VEuPathDB" id="FungiDB:YLR068W"/>
<dbReference type="eggNOG" id="KOG4851">
    <property type="taxonomic scope" value="Eukaryota"/>
</dbReference>
<dbReference type="HOGENOM" id="CLU_105541_0_0_1"/>
<dbReference type="InParanoid" id="Q12247"/>
<dbReference type="OMA" id="MGPKIDD"/>
<dbReference type="OrthoDB" id="2135053at2759"/>
<dbReference type="BioCyc" id="YEAST:G3O-32221-MONOMER"/>
<dbReference type="BioGRID-ORCS" id="850757">
    <property type="hits" value="7 hits in 10 CRISPR screens"/>
</dbReference>
<dbReference type="PRO" id="PR:Q12247"/>
<dbReference type="Proteomes" id="UP000002311">
    <property type="component" value="Chromosome XII"/>
</dbReference>
<dbReference type="RNAct" id="Q12247">
    <property type="molecule type" value="protein"/>
</dbReference>
<dbReference type="GO" id="GO:0005730">
    <property type="term" value="C:nucleolus"/>
    <property type="evidence" value="ECO:0000314"/>
    <property type="project" value="ComplexPortal"/>
</dbReference>
<dbReference type="GO" id="GO:0005634">
    <property type="term" value="C:nucleus"/>
    <property type="evidence" value="ECO:0007005"/>
    <property type="project" value="SGD"/>
</dbReference>
<dbReference type="GO" id="GO:0032040">
    <property type="term" value="C:small-subunit processome"/>
    <property type="evidence" value="ECO:0000353"/>
    <property type="project" value="ComplexPortal"/>
</dbReference>
<dbReference type="GO" id="GO:0030490">
    <property type="term" value="P:maturation of SSU-rRNA"/>
    <property type="evidence" value="ECO:0000303"/>
    <property type="project" value="ComplexPortal"/>
</dbReference>
<dbReference type="GO" id="GO:0000462">
    <property type="term" value="P:maturation of SSU-rRNA from tricistronic rRNA transcript (SSU-rRNA, 5.8S rRNA, LSU-rRNA)"/>
    <property type="evidence" value="ECO:0000315"/>
    <property type="project" value="SGD"/>
</dbReference>
<dbReference type="InterPro" id="IPR013730">
    <property type="entry name" value="Fyv7/TAP26"/>
</dbReference>
<dbReference type="InterPro" id="IPR017265">
    <property type="entry name" value="Fyv7_fungi"/>
</dbReference>
<dbReference type="Pfam" id="PF08524">
    <property type="entry name" value="rRNA_processing"/>
    <property type="match status" value="1"/>
</dbReference>
<dbReference type="PIRSF" id="PIRSF037708">
    <property type="entry name" value="rRNA_proc_FYV7"/>
    <property type="match status" value="1"/>
</dbReference>
<proteinExistence type="evidence at protein level"/>
<organism>
    <name type="scientific">Saccharomyces cerevisiae (strain ATCC 204508 / S288c)</name>
    <name type="common">Baker's yeast</name>
    <dbReference type="NCBI Taxonomy" id="559292"/>
    <lineage>
        <taxon>Eukaryota</taxon>
        <taxon>Fungi</taxon>
        <taxon>Dikarya</taxon>
        <taxon>Ascomycota</taxon>
        <taxon>Saccharomycotina</taxon>
        <taxon>Saccharomycetes</taxon>
        <taxon>Saccharomycetales</taxon>
        <taxon>Saccharomycetaceae</taxon>
        <taxon>Saccharomyces</taxon>
    </lineage>
</organism>
<accession>Q12247</accession>
<accession>D6VY69</accession>
<evidence type="ECO:0000255" key="1"/>
<evidence type="ECO:0000256" key="2">
    <source>
        <dbReference type="SAM" id="MobiDB-lite"/>
    </source>
</evidence>
<evidence type="ECO:0000269" key="3">
    <source>
    </source>
</evidence>
<evidence type="ECO:0000269" key="4">
    <source>
    </source>
</evidence>
<evidence type="ECO:0000269" key="5">
    <source>
    </source>
</evidence>
<evidence type="ECO:0000269" key="6">
    <source>
    </source>
</evidence>
<evidence type="ECO:0000305" key="7"/>
<feature type="chain" id="PRO_0000087404" description="rRNA-processing protein FYV7">
    <location>
        <begin position="1"/>
        <end position="151"/>
    </location>
</feature>
<feature type="region of interest" description="Disordered" evidence="2">
    <location>
        <begin position="76"/>
        <end position="151"/>
    </location>
</feature>
<feature type="coiled-coil region" evidence="1">
    <location>
        <begin position="70"/>
        <end position="113"/>
    </location>
</feature>
<feature type="compositionally biased region" description="Basic and acidic residues" evidence="2">
    <location>
        <begin position="89"/>
        <end position="115"/>
    </location>
</feature>
<feature type="compositionally biased region" description="Basic and acidic residues" evidence="2">
    <location>
        <begin position="135"/>
        <end position="151"/>
    </location>
</feature>